<name>HR96_DROME</name>
<gene>
    <name type="primary">Hr96</name>
    <name type="synonym">NR1J1</name>
    <name type="ORF">CG11783</name>
</gene>
<accession>Q24143</accession>
<accession>Q9VBZ7</accession>
<reference key="1">
    <citation type="journal article" date="1995" name="Proc. Natl. Acad. Sci. U.S.A.">
        <title>Isolation, regulation, and DNA-binding properties of three Drosophila nuclear hormone receptor superfamily members.</title>
        <authorList>
            <person name="Fisk G.J."/>
            <person name="Thummel C.S."/>
        </authorList>
    </citation>
    <scope>NUCLEOTIDE SEQUENCE [MRNA]</scope>
    <scope>CHARACTERIZATION</scope>
</reference>
<reference key="2">
    <citation type="journal article" date="2000" name="Science">
        <title>The genome sequence of Drosophila melanogaster.</title>
        <authorList>
            <person name="Adams M.D."/>
            <person name="Celniker S.E."/>
            <person name="Holt R.A."/>
            <person name="Evans C.A."/>
            <person name="Gocayne J.D."/>
            <person name="Amanatides P.G."/>
            <person name="Scherer S.E."/>
            <person name="Li P.W."/>
            <person name="Hoskins R.A."/>
            <person name="Galle R.F."/>
            <person name="George R.A."/>
            <person name="Lewis S.E."/>
            <person name="Richards S."/>
            <person name="Ashburner M."/>
            <person name="Henderson S.N."/>
            <person name="Sutton G.G."/>
            <person name="Wortman J.R."/>
            <person name="Yandell M.D."/>
            <person name="Zhang Q."/>
            <person name="Chen L.X."/>
            <person name="Brandon R.C."/>
            <person name="Rogers Y.-H.C."/>
            <person name="Blazej R.G."/>
            <person name="Champe M."/>
            <person name="Pfeiffer B.D."/>
            <person name="Wan K.H."/>
            <person name="Doyle C."/>
            <person name="Baxter E.G."/>
            <person name="Helt G."/>
            <person name="Nelson C.R."/>
            <person name="Miklos G.L.G."/>
            <person name="Abril J.F."/>
            <person name="Agbayani A."/>
            <person name="An H.-J."/>
            <person name="Andrews-Pfannkoch C."/>
            <person name="Baldwin D."/>
            <person name="Ballew R.M."/>
            <person name="Basu A."/>
            <person name="Baxendale J."/>
            <person name="Bayraktaroglu L."/>
            <person name="Beasley E.M."/>
            <person name="Beeson K.Y."/>
            <person name="Benos P.V."/>
            <person name="Berman B.P."/>
            <person name="Bhandari D."/>
            <person name="Bolshakov S."/>
            <person name="Borkova D."/>
            <person name="Botchan M.R."/>
            <person name="Bouck J."/>
            <person name="Brokstein P."/>
            <person name="Brottier P."/>
            <person name="Burtis K.C."/>
            <person name="Busam D.A."/>
            <person name="Butler H."/>
            <person name="Cadieu E."/>
            <person name="Center A."/>
            <person name="Chandra I."/>
            <person name="Cherry J.M."/>
            <person name="Cawley S."/>
            <person name="Dahlke C."/>
            <person name="Davenport L.B."/>
            <person name="Davies P."/>
            <person name="de Pablos B."/>
            <person name="Delcher A."/>
            <person name="Deng Z."/>
            <person name="Mays A.D."/>
            <person name="Dew I."/>
            <person name="Dietz S.M."/>
            <person name="Dodson K."/>
            <person name="Doup L.E."/>
            <person name="Downes M."/>
            <person name="Dugan-Rocha S."/>
            <person name="Dunkov B.C."/>
            <person name="Dunn P."/>
            <person name="Durbin K.J."/>
            <person name="Evangelista C.C."/>
            <person name="Ferraz C."/>
            <person name="Ferriera S."/>
            <person name="Fleischmann W."/>
            <person name="Fosler C."/>
            <person name="Gabrielian A.E."/>
            <person name="Garg N.S."/>
            <person name="Gelbart W.M."/>
            <person name="Glasser K."/>
            <person name="Glodek A."/>
            <person name="Gong F."/>
            <person name="Gorrell J.H."/>
            <person name="Gu Z."/>
            <person name="Guan P."/>
            <person name="Harris M."/>
            <person name="Harris N.L."/>
            <person name="Harvey D.A."/>
            <person name="Heiman T.J."/>
            <person name="Hernandez J.R."/>
            <person name="Houck J."/>
            <person name="Hostin D."/>
            <person name="Houston K.A."/>
            <person name="Howland T.J."/>
            <person name="Wei M.-H."/>
            <person name="Ibegwam C."/>
            <person name="Jalali M."/>
            <person name="Kalush F."/>
            <person name="Karpen G.H."/>
            <person name="Ke Z."/>
            <person name="Kennison J.A."/>
            <person name="Ketchum K.A."/>
            <person name="Kimmel B.E."/>
            <person name="Kodira C.D."/>
            <person name="Kraft C.L."/>
            <person name="Kravitz S."/>
            <person name="Kulp D."/>
            <person name="Lai Z."/>
            <person name="Lasko P."/>
            <person name="Lei Y."/>
            <person name="Levitsky A.A."/>
            <person name="Li J.H."/>
            <person name="Li Z."/>
            <person name="Liang Y."/>
            <person name="Lin X."/>
            <person name="Liu X."/>
            <person name="Mattei B."/>
            <person name="McIntosh T.C."/>
            <person name="McLeod M.P."/>
            <person name="McPherson D."/>
            <person name="Merkulov G."/>
            <person name="Milshina N.V."/>
            <person name="Mobarry C."/>
            <person name="Morris J."/>
            <person name="Moshrefi A."/>
            <person name="Mount S.M."/>
            <person name="Moy M."/>
            <person name="Murphy B."/>
            <person name="Murphy L."/>
            <person name="Muzny D.M."/>
            <person name="Nelson D.L."/>
            <person name="Nelson D.R."/>
            <person name="Nelson K.A."/>
            <person name="Nixon K."/>
            <person name="Nusskern D.R."/>
            <person name="Pacleb J.M."/>
            <person name="Palazzolo M."/>
            <person name="Pittman G.S."/>
            <person name="Pan S."/>
            <person name="Pollard J."/>
            <person name="Puri V."/>
            <person name="Reese M.G."/>
            <person name="Reinert K."/>
            <person name="Remington K."/>
            <person name="Saunders R.D.C."/>
            <person name="Scheeler F."/>
            <person name="Shen H."/>
            <person name="Shue B.C."/>
            <person name="Siden-Kiamos I."/>
            <person name="Simpson M."/>
            <person name="Skupski M.P."/>
            <person name="Smith T.J."/>
            <person name="Spier E."/>
            <person name="Spradling A.C."/>
            <person name="Stapleton M."/>
            <person name="Strong R."/>
            <person name="Sun E."/>
            <person name="Svirskas R."/>
            <person name="Tector C."/>
            <person name="Turner R."/>
            <person name="Venter E."/>
            <person name="Wang A.H."/>
            <person name="Wang X."/>
            <person name="Wang Z.-Y."/>
            <person name="Wassarman D.A."/>
            <person name="Weinstock G.M."/>
            <person name="Weissenbach J."/>
            <person name="Williams S.M."/>
            <person name="Woodage T."/>
            <person name="Worley K.C."/>
            <person name="Wu D."/>
            <person name="Yang S."/>
            <person name="Yao Q.A."/>
            <person name="Ye J."/>
            <person name="Yeh R.-F."/>
            <person name="Zaveri J.S."/>
            <person name="Zhan M."/>
            <person name="Zhang G."/>
            <person name="Zhao Q."/>
            <person name="Zheng L."/>
            <person name="Zheng X.H."/>
            <person name="Zhong F.N."/>
            <person name="Zhong W."/>
            <person name="Zhou X."/>
            <person name="Zhu S.C."/>
            <person name="Zhu X."/>
            <person name="Smith H.O."/>
            <person name="Gibbs R.A."/>
            <person name="Myers E.W."/>
            <person name="Rubin G.M."/>
            <person name="Venter J.C."/>
        </authorList>
    </citation>
    <scope>NUCLEOTIDE SEQUENCE [LARGE SCALE GENOMIC DNA]</scope>
    <source>
        <strain>Berkeley</strain>
    </source>
</reference>
<reference key="3">
    <citation type="journal article" date="2002" name="Genome Biol.">
        <title>Annotation of the Drosophila melanogaster euchromatic genome: a systematic review.</title>
        <authorList>
            <person name="Misra S."/>
            <person name="Crosby M.A."/>
            <person name="Mungall C.J."/>
            <person name="Matthews B.B."/>
            <person name="Campbell K.S."/>
            <person name="Hradecky P."/>
            <person name="Huang Y."/>
            <person name="Kaminker J.S."/>
            <person name="Millburn G.H."/>
            <person name="Prochnik S.E."/>
            <person name="Smith C.D."/>
            <person name="Tupy J.L."/>
            <person name="Whitfield E.J."/>
            <person name="Bayraktaroglu L."/>
            <person name="Berman B.P."/>
            <person name="Bettencourt B.R."/>
            <person name="Celniker S.E."/>
            <person name="de Grey A.D.N.J."/>
            <person name="Drysdale R.A."/>
            <person name="Harris N.L."/>
            <person name="Richter J."/>
            <person name="Russo S."/>
            <person name="Schroeder A.J."/>
            <person name="Shu S.Q."/>
            <person name="Stapleton M."/>
            <person name="Yamada C."/>
            <person name="Ashburner M."/>
            <person name="Gelbart W.M."/>
            <person name="Rubin G.M."/>
            <person name="Lewis S.E."/>
        </authorList>
    </citation>
    <scope>GENOME REANNOTATION</scope>
    <source>
        <strain>Berkeley</strain>
    </source>
</reference>
<reference key="4">
    <citation type="journal article" date="2002" name="Genome Biol.">
        <title>A Drosophila full-length cDNA resource.</title>
        <authorList>
            <person name="Stapleton M."/>
            <person name="Carlson J.W."/>
            <person name="Brokstein P."/>
            <person name="Yu C."/>
            <person name="Champe M."/>
            <person name="George R.A."/>
            <person name="Guarin H."/>
            <person name="Kronmiller B."/>
            <person name="Pacleb J.M."/>
            <person name="Park S."/>
            <person name="Wan K.H."/>
            <person name="Rubin G.M."/>
            <person name="Celniker S.E."/>
        </authorList>
    </citation>
    <scope>NUCLEOTIDE SEQUENCE [LARGE SCALE MRNA]</scope>
    <source>
        <strain>Berkeley</strain>
        <tissue>Head</tissue>
    </source>
</reference>
<proteinExistence type="evidence at protein level"/>
<dbReference type="EMBL" id="U36792">
    <property type="protein sequence ID" value="AAC46928.1"/>
    <property type="molecule type" value="mRNA"/>
</dbReference>
<dbReference type="EMBL" id="AE014297">
    <property type="protein sequence ID" value="AAF56379.1"/>
    <property type="molecule type" value="Genomic_DNA"/>
</dbReference>
<dbReference type="EMBL" id="AY051486">
    <property type="protein sequence ID" value="AAK92910.1"/>
    <property type="molecule type" value="mRNA"/>
</dbReference>
<dbReference type="RefSeq" id="NP_524493.1">
    <property type="nucleotide sequence ID" value="NM_079769.3"/>
</dbReference>
<dbReference type="SMR" id="Q24143"/>
<dbReference type="BioGRID" id="67914">
    <property type="interactions" value="6"/>
</dbReference>
<dbReference type="DIP" id="DIP-20167N"/>
<dbReference type="FunCoup" id="Q24143">
    <property type="interactions" value="66"/>
</dbReference>
<dbReference type="IntAct" id="Q24143">
    <property type="interactions" value="3"/>
</dbReference>
<dbReference type="STRING" id="7227.FBpp0084131"/>
<dbReference type="PaxDb" id="7227-FBpp0084131"/>
<dbReference type="EnsemblMetazoa" id="FBtr0084756">
    <property type="protein sequence ID" value="FBpp0084131"/>
    <property type="gene ID" value="FBgn0015240"/>
</dbReference>
<dbReference type="GeneID" id="42993"/>
<dbReference type="KEGG" id="dme:Dmel_CG11783"/>
<dbReference type="AGR" id="FB:FBgn0015240"/>
<dbReference type="CTD" id="42993"/>
<dbReference type="FlyBase" id="FBgn0015240">
    <property type="gene designation" value="Hr96"/>
</dbReference>
<dbReference type="VEuPathDB" id="VectorBase:FBgn0015240"/>
<dbReference type="eggNOG" id="KOG3575">
    <property type="taxonomic scope" value="Eukaryota"/>
</dbReference>
<dbReference type="GeneTree" id="ENSGT00940000171624"/>
<dbReference type="HOGENOM" id="CLU_007368_12_2_1"/>
<dbReference type="InParanoid" id="Q24143"/>
<dbReference type="OMA" id="AAWKVPH"/>
<dbReference type="OrthoDB" id="6352325at2759"/>
<dbReference type="PhylomeDB" id="Q24143"/>
<dbReference type="Reactome" id="R-DME-196791">
    <property type="pathway name" value="Vitamin D (calciferol) metabolism"/>
</dbReference>
<dbReference type="Reactome" id="R-DME-383280">
    <property type="pathway name" value="Nuclear Receptor transcription pathway"/>
</dbReference>
<dbReference type="Reactome" id="R-DME-4090294">
    <property type="pathway name" value="SUMOylation of intracellular receptors"/>
</dbReference>
<dbReference type="SignaLink" id="Q24143"/>
<dbReference type="BioGRID-ORCS" id="42993">
    <property type="hits" value="0 hits in 3 CRISPR screens"/>
</dbReference>
<dbReference type="GenomeRNAi" id="42993"/>
<dbReference type="PRO" id="PR:Q24143"/>
<dbReference type="Proteomes" id="UP000000803">
    <property type="component" value="Chromosome 3R"/>
</dbReference>
<dbReference type="Bgee" id="FBgn0015240">
    <property type="expression patterns" value="Expressed in midgut large flat cell (Drosophila) in digestive tract and 96 other cell types or tissues"/>
</dbReference>
<dbReference type="GO" id="GO:0005634">
    <property type="term" value="C:nucleus"/>
    <property type="evidence" value="ECO:0000318"/>
    <property type="project" value="GO_Central"/>
</dbReference>
<dbReference type="GO" id="GO:0004879">
    <property type="term" value="F:nuclear receptor activity"/>
    <property type="evidence" value="ECO:0000318"/>
    <property type="project" value="GO_Central"/>
</dbReference>
<dbReference type="GO" id="GO:0000978">
    <property type="term" value="F:RNA polymerase II cis-regulatory region sequence-specific DNA binding"/>
    <property type="evidence" value="ECO:0000318"/>
    <property type="project" value="GO_Central"/>
</dbReference>
<dbReference type="GO" id="GO:0000977">
    <property type="term" value="F:RNA polymerase II transcription regulatory region sequence-specific DNA binding"/>
    <property type="evidence" value="ECO:0000314"/>
    <property type="project" value="FlyBase"/>
</dbReference>
<dbReference type="GO" id="GO:0008270">
    <property type="term" value="F:zinc ion binding"/>
    <property type="evidence" value="ECO:0007669"/>
    <property type="project" value="UniProtKB-KW"/>
</dbReference>
<dbReference type="GO" id="GO:0030154">
    <property type="term" value="P:cell differentiation"/>
    <property type="evidence" value="ECO:0000318"/>
    <property type="project" value="GO_Central"/>
</dbReference>
<dbReference type="GO" id="GO:0042632">
    <property type="term" value="P:cholesterol homeostasis"/>
    <property type="evidence" value="ECO:0000315"/>
    <property type="project" value="FlyBase"/>
</dbReference>
<dbReference type="GO" id="GO:0030522">
    <property type="term" value="P:intracellular receptor signaling pathway"/>
    <property type="evidence" value="ECO:0000318"/>
    <property type="project" value="GO_Central"/>
</dbReference>
<dbReference type="GO" id="GO:0000122">
    <property type="term" value="P:negative regulation of transcription by RNA polymerase II"/>
    <property type="evidence" value="ECO:0000318"/>
    <property type="project" value="GO_Central"/>
</dbReference>
<dbReference type="GO" id="GO:0045944">
    <property type="term" value="P:positive regulation of transcription by RNA polymerase II"/>
    <property type="evidence" value="ECO:0000318"/>
    <property type="project" value="GO_Central"/>
</dbReference>
<dbReference type="GO" id="GO:0006357">
    <property type="term" value="P:regulation of transcription by RNA polymerase II"/>
    <property type="evidence" value="ECO:0000314"/>
    <property type="project" value="FlyBase"/>
</dbReference>
<dbReference type="GO" id="GO:0042594">
    <property type="term" value="P:response to starvation"/>
    <property type="evidence" value="ECO:0000315"/>
    <property type="project" value="FlyBase"/>
</dbReference>
<dbReference type="GO" id="GO:0070328">
    <property type="term" value="P:triglyceride homeostasis"/>
    <property type="evidence" value="ECO:0000315"/>
    <property type="project" value="FlyBase"/>
</dbReference>
<dbReference type="CDD" id="cd06966">
    <property type="entry name" value="NR_DBD_CAR"/>
    <property type="match status" value="1"/>
</dbReference>
<dbReference type="CDD" id="cd06929">
    <property type="entry name" value="NR_LBD_F1"/>
    <property type="match status" value="1"/>
</dbReference>
<dbReference type="FunFam" id="1.10.565.10:FF:000035">
    <property type="entry name" value="Nuclear hormone receptor HR96"/>
    <property type="match status" value="1"/>
</dbReference>
<dbReference type="FunFam" id="3.30.50.10:FF:000042">
    <property type="entry name" value="Nuclear hormone receptor HR96"/>
    <property type="match status" value="1"/>
</dbReference>
<dbReference type="Gene3D" id="3.30.50.10">
    <property type="entry name" value="Erythroid Transcription Factor GATA-1, subunit A"/>
    <property type="match status" value="1"/>
</dbReference>
<dbReference type="Gene3D" id="1.10.565.10">
    <property type="entry name" value="Retinoid X Receptor"/>
    <property type="match status" value="1"/>
</dbReference>
<dbReference type="InterPro" id="IPR035500">
    <property type="entry name" value="NHR-like_dom_sf"/>
</dbReference>
<dbReference type="InterPro" id="IPR000536">
    <property type="entry name" value="Nucl_hrmn_rcpt_lig-bd"/>
</dbReference>
<dbReference type="InterPro" id="IPR050234">
    <property type="entry name" value="Nuclear_hormone_rcpt_NR1"/>
</dbReference>
<dbReference type="InterPro" id="IPR001628">
    <property type="entry name" value="Znf_hrmn_rcpt"/>
</dbReference>
<dbReference type="InterPro" id="IPR013088">
    <property type="entry name" value="Znf_NHR/GATA"/>
</dbReference>
<dbReference type="PANTHER" id="PTHR24082">
    <property type="entry name" value="NUCLEAR HORMONE RECEPTOR"/>
    <property type="match status" value="1"/>
</dbReference>
<dbReference type="PANTHER" id="PTHR24082:SF283">
    <property type="entry name" value="NUCLEAR HORMONE RECEPTOR HR96"/>
    <property type="match status" value="1"/>
</dbReference>
<dbReference type="Pfam" id="PF00104">
    <property type="entry name" value="Hormone_recep"/>
    <property type="match status" value="1"/>
</dbReference>
<dbReference type="Pfam" id="PF00105">
    <property type="entry name" value="zf-C4"/>
    <property type="match status" value="1"/>
</dbReference>
<dbReference type="PRINTS" id="PR00047">
    <property type="entry name" value="STROIDFINGER"/>
</dbReference>
<dbReference type="SMART" id="SM00430">
    <property type="entry name" value="HOLI"/>
    <property type="match status" value="1"/>
</dbReference>
<dbReference type="SMART" id="SM00399">
    <property type="entry name" value="ZnF_C4"/>
    <property type="match status" value="1"/>
</dbReference>
<dbReference type="SUPFAM" id="SSF57716">
    <property type="entry name" value="Glucocorticoid receptor-like (DNA-binding domain)"/>
    <property type="match status" value="1"/>
</dbReference>
<dbReference type="SUPFAM" id="SSF48508">
    <property type="entry name" value="Nuclear receptor ligand-binding domain"/>
    <property type="match status" value="1"/>
</dbReference>
<dbReference type="PROSITE" id="PS51843">
    <property type="entry name" value="NR_LBD"/>
    <property type="match status" value="1"/>
</dbReference>
<dbReference type="PROSITE" id="PS00031">
    <property type="entry name" value="NUCLEAR_REC_DBD_1"/>
    <property type="match status" value="1"/>
</dbReference>
<dbReference type="PROSITE" id="PS51030">
    <property type="entry name" value="NUCLEAR_REC_DBD_2"/>
    <property type="match status" value="1"/>
</dbReference>
<comment type="function">
    <text>Binds selectively to the HSP27 20E response element.</text>
</comment>
<comment type="subcellular location">
    <subcellularLocation>
        <location>Nucleus</location>
    </subcellularLocation>
</comment>
<comment type="developmental stage">
    <text>Highest expression in third-instar larvae and prepupae.</text>
</comment>
<comment type="induction">
    <text>By 20-hydroxyecdysone (20HE) 106 hours after egg laying.</text>
</comment>
<comment type="similarity">
    <text evidence="4">Belongs to the nuclear hormone receptor family. NR1 subfamily.</text>
</comment>
<protein>
    <recommendedName>
        <fullName>Nuclear hormone receptor HR96</fullName>
        <shortName>dHR96</shortName>
    </recommendedName>
    <alternativeName>
        <fullName>Nuclear receptor subfamily 1 group J member 1</fullName>
    </alternativeName>
</protein>
<organism>
    <name type="scientific">Drosophila melanogaster</name>
    <name type="common">Fruit fly</name>
    <dbReference type="NCBI Taxonomy" id="7227"/>
    <lineage>
        <taxon>Eukaryota</taxon>
        <taxon>Metazoa</taxon>
        <taxon>Ecdysozoa</taxon>
        <taxon>Arthropoda</taxon>
        <taxon>Hexapoda</taxon>
        <taxon>Insecta</taxon>
        <taxon>Pterygota</taxon>
        <taxon>Neoptera</taxon>
        <taxon>Endopterygota</taxon>
        <taxon>Diptera</taxon>
        <taxon>Brachycera</taxon>
        <taxon>Muscomorpha</taxon>
        <taxon>Ephydroidea</taxon>
        <taxon>Drosophilidae</taxon>
        <taxon>Drosophila</taxon>
        <taxon>Sophophora</taxon>
    </lineage>
</organism>
<sequence length="723" mass="81029">MSPPKNCAVCGDKALGYNFNAVTCESCKAFFRRNALAKKQFTCPFNQNCDITVVTRRFCQKCRLRKCLDIGMKSENIMSEEDKLIKRRKIETNRAKRRLMENGTDACDADGGEERDHKAPADSSSSNLDHYSGSQDSQSCGSADSGANGCSGRQASSPGTQVNPLQMTAEKIVDQIVSDPDRASQAINRLMRTQKEAISVMEKVISSQKDALRLVSHLIDYPGDALKIISKFMNSPFNALTVFTKFMSSPTDGVEIISKIVDSPADVVEFMQNLMHSPEDAIDIMNKFMNTPAEALRILNRILSGGGANAAQQTADRKPLLDKEPAVKPAAPAERADTVIQSMLGNSPPISPHDAAVDLQYHSPGVGEQPSTSSSHPLPYIANSPDFDLKTFMQTNYNDEPSLDSDFSINSIESVLSEVIRIEYQAFNSIQQAASRVKEEMSYGTQSTYGGCNSAANNSQPHLQQPICAPSTQQLDRELNEAEQMKLRELRLASEALYDPVDEDLSALMMGDDRIKPDDTRHNPKLLQLINLTAVAIKRLIKMAKKITAFRDMCQEDQVALLKGGCTEMMIMRSVMIYDDDRAAWKVPHTKENMGNIRTDLLKFAEGNIYEEHQKFITTFDEKWRMDENIILIMCAIVLFTSARSRVIHKDVIRLEQNSYYYLLRRYLESVYSGCEARNAFIKLIQKISDVERLNKFIINVYLNVNPSQVEPLLREIFDLKNH</sequence>
<feature type="chain" id="PRO_0000053557" description="Nuclear hormone receptor HR96">
    <location>
        <begin position="1"/>
        <end position="723"/>
    </location>
</feature>
<feature type="domain" description="NR LBD" evidence="2">
    <location>
        <begin position="483"/>
        <end position="723"/>
    </location>
</feature>
<feature type="DNA-binding region" description="Nuclear receptor" evidence="1">
    <location>
        <begin position="4"/>
        <end position="79"/>
    </location>
</feature>
<feature type="zinc finger region" description="NR C4-type" evidence="1">
    <location>
        <begin position="7"/>
        <end position="27"/>
    </location>
</feature>
<feature type="zinc finger region" description="NR C4-type" evidence="1">
    <location>
        <begin position="43"/>
        <end position="67"/>
    </location>
</feature>
<feature type="region of interest" description="Disordered" evidence="3">
    <location>
        <begin position="95"/>
        <end position="163"/>
    </location>
</feature>
<feature type="compositionally biased region" description="Polar residues" evidence="3">
    <location>
        <begin position="122"/>
        <end position="142"/>
    </location>
</feature>
<feature type="compositionally biased region" description="Polar residues" evidence="3">
    <location>
        <begin position="151"/>
        <end position="163"/>
    </location>
</feature>
<keyword id="KW-0238">DNA-binding</keyword>
<keyword id="KW-0479">Metal-binding</keyword>
<keyword id="KW-0539">Nucleus</keyword>
<keyword id="KW-0675">Receptor</keyword>
<keyword id="KW-1185">Reference proteome</keyword>
<keyword id="KW-0804">Transcription</keyword>
<keyword id="KW-0805">Transcription regulation</keyword>
<keyword id="KW-0862">Zinc</keyword>
<keyword id="KW-0863">Zinc-finger</keyword>
<evidence type="ECO:0000255" key="1">
    <source>
        <dbReference type="PROSITE-ProRule" id="PRU00407"/>
    </source>
</evidence>
<evidence type="ECO:0000255" key="2">
    <source>
        <dbReference type="PROSITE-ProRule" id="PRU01189"/>
    </source>
</evidence>
<evidence type="ECO:0000256" key="3">
    <source>
        <dbReference type="SAM" id="MobiDB-lite"/>
    </source>
</evidence>
<evidence type="ECO:0000305" key="4"/>